<keyword id="KW-0460">Magnesium</keyword>
<keyword id="KW-0479">Metal-binding</keyword>
<keyword id="KW-1185">Reference proteome</keyword>
<keyword id="KW-0784">Thiamine biosynthesis</keyword>
<keyword id="KW-0808">Transferase</keyword>
<feature type="chain" id="PRO_0000157015" description="Putative thiamine-phosphate synthase">
    <location>
        <begin position="1"/>
        <end position="213"/>
    </location>
</feature>
<feature type="binding site" evidence="1">
    <location>
        <begin position="38"/>
        <end position="42"/>
    </location>
    <ligand>
        <name>4-amino-2-methyl-5-(diphosphooxymethyl)pyrimidine</name>
        <dbReference type="ChEBI" id="CHEBI:57841"/>
    </ligand>
</feature>
<feature type="binding site" evidence="1">
    <location>
        <position position="70"/>
    </location>
    <ligand>
        <name>4-amino-2-methyl-5-(diphosphooxymethyl)pyrimidine</name>
        <dbReference type="ChEBI" id="CHEBI:57841"/>
    </ligand>
</feature>
<feature type="binding site" evidence="1">
    <location>
        <position position="71"/>
    </location>
    <ligand>
        <name>Mg(2+)</name>
        <dbReference type="ChEBI" id="CHEBI:18420"/>
    </ligand>
</feature>
<feature type="binding site" evidence="1">
    <location>
        <position position="109"/>
    </location>
    <ligand>
        <name>4-amino-2-methyl-5-(diphosphooxymethyl)pyrimidine</name>
        <dbReference type="ChEBI" id="CHEBI:57841"/>
    </ligand>
</feature>
<feature type="binding site" evidence="1">
    <location>
        <begin position="135"/>
        <end position="137"/>
    </location>
    <ligand>
        <name>2-[(2R,5Z)-2-carboxy-4-methylthiazol-5(2H)-ylidene]ethyl phosphate</name>
        <dbReference type="ChEBI" id="CHEBI:62899"/>
    </ligand>
</feature>
<feature type="binding site" evidence="1">
    <location>
        <position position="138"/>
    </location>
    <ligand>
        <name>4-amino-2-methyl-5-(diphosphooxymethyl)pyrimidine</name>
        <dbReference type="ChEBI" id="CHEBI:57841"/>
    </ligand>
</feature>
<feature type="binding site" evidence="1">
    <location>
        <position position="166"/>
    </location>
    <ligand>
        <name>2-[(2R,5Z)-2-carboxy-4-methylthiazol-5(2H)-ylidene]ethyl phosphate</name>
        <dbReference type="ChEBI" id="CHEBI:62899"/>
    </ligand>
</feature>
<feature type="binding site" evidence="1">
    <location>
        <begin position="186"/>
        <end position="187"/>
    </location>
    <ligand>
        <name>2-[(2R,5Z)-2-carboxy-4-methylthiazol-5(2H)-ylidene]ethyl phosphate</name>
        <dbReference type="ChEBI" id="CHEBI:62899"/>
    </ligand>
</feature>
<organism>
    <name type="scientific">Geobacter sulfurreducens (strain ATCC 51573 / DSM 12127 / PCA)</name>
    <dbReference type="NCBI Taxonomy" id="243231"/>
    <lineage>
        <taxon>Bacteria</taxon>
        <taxon>Pseudomonadati</taxon>
        <taxon>Thermodesulfobacteriota</taxon>
        <taxon>Desulfuromonadia</taxon>
        <taxon>Geobacterales</taxon>
        <taxon>Geobacteraceae</taxon>
        <taxon>Geobacter</taxon>
    </lineage>
</organism>
<proteinExistence type="inferred from homology"/>
<protein>
    <recommendedName>
        <fullName>Putative thiamine-phosphate synthase</fullName>
        <shortName>TP synthase</shortName>
        <shortName>TPS</shortName>
        <ecNumber>2.5.1.3</ecNumber>
    </recommendedName>
    <alternativeName>
        <fullName>Thiamine-phosphate pyrophosphorylase</fullName>
        <shortName>TMP pyrophosphorylase</shortName>
        <shortName>TMP-PPase</shortName>
    </alternativeName>
</protein>
<name>THIE_GEOSL</name>
<comment type="function">
    <text evidence="1">Condenses 4-methyl-5-(beta-hydroxyethyl)thiazole monophosphate (THZ-P) and 2-methyl-4-amino-5-hydroxymethyl pyrimidine pyrophosphate (HMP-PP) to form thiamine monophosphate (TMP).</text>
</comment>
<comment type="catalytic activity">
    <reaction>
        <text>2-[(2R,5Z)-2-carboxy-4-methylthiazol-5(2H)-ylidene]ethyl phosphate + 4-amino-2-methyl-5-(diphosphooxymethyl)pyrimidine + 2 H(+) = thiamine phosphate + CO2 + diphosphate</text>
        <dbReference type="Rhea" id="RHEA:47844"/>
        <dbReference type="ChEBI" id="CHEBI:15378"/>
        <dbReference type="ChEBI" id="CHEBI:16526"/>
        <dbReference type="ChEBI" id="CHEBI:33019"/>
        <dbReference type="ChEBI" id="CHEBI:37575"/>
        <dbReference type="ChEBI" id="CHEBI:57841"/>
        <dbReference type="ChEBI" id="CHEBI:62899"/>
        <dbReference type="EC" id="2.5.1.3"/>
    </reaction>
</comment>
<comment type="catalytic activity">
    <reaction>
        <text>2-(2-carboxy-4-methylthiazol-5-yl)ethyl phosphate + 4-amino-2-methyl-5-(diphosphooxymethyl)pyrimidine + 2 H(+) = thiamine phosphate + CO2 + diphosphate</text>
        <dbReference type="Rhea" id="RHEA:47848"/>
        <dbReference type="ChEBI" id="CHEBI:15378"/>
        <dbReference type="ChEBI" id="CHEBI:16526"/>
        <dbReference type="ChEBI" id="CHEBI:33019"/>
        <dbReference type="ChEBI" id="CHEBI:37575"/>
        <dbReference type="ChEBI" id="CHEBI:57841"/>
        <dbReference type="ChEBI" id="CHEBI:62890"/>
        <dbReference type="EC" id="2.5.1.3"/>
    </reaction>
</comment>
<comment type="catalytic activity">
    <reaction>
        <text>4-methyl-5-(2-phosphooxyethyl)-thiazole + 4-amino-2-methyl-5-(diphosphooxymethyl)pyrimidine + H(+) = thiamine phosphate + diphosphate</text>
        <dbReference type="Rhea" id="RHEA:22328"/>
        <dbReference type="ChEBI" id="CHEBI:15378"/>
        <dbReference type="ChEBI" id="CHEBI:33019"/>
        <dbReference type="ChEBI" id="CHEBI:37575"/>
        <dbReference type="ChEBI" id="CHEBI:57841"/>
        <dbReference type="ChEBI" id="CHEBI:58296"/>
        <dbReference type="EC" id="2.5.1.3"/>
    </reaction>
</comment>
<comment type="cofactor">
    <cofactor evidence="1">
        <name>Mg(2+)</name>
        <dbReference type="ChEBI" id="CHEBI:18420"/>
    </cofactor>
    <text evidence="1">Binds 1 Mg(2+) ion per subunit.</text>
</comment>
<comment type="pathway">
    <text>Cofactor biosynthesis; thiamine diphosphate biosynthesis; thiamine phosphate from 4-amino-2-methyl-5-diphosphomethylpyrimidine and 4-methyl-5-(2-phosphoethyl)-thiazole: step 1/1.</text>
</comment>
<comment type="similarity">
    <text evidence="2">Belongs to the thiamine-phosphate synthase family.</text>
</comment>
<sequence>MAKVDFSLYLITDRHQAGGRDLLAVVEGALAGGVRCVQLREKDLPARTLLELARAMRRLTDRFGARLLINDRVDIALAAGADGVHLGEEGMPAAVARELLGSGRLIGVSCHGRGGAAAAVAQGADFITFGPVYPTPSKAAYGEPVGIDQLAATTKEIHIPVFALGGIKEANIPEALAAGAAGVALISAIIADPDPRERARALLALLPPRTRDE</sequence>
<gene>
    <name type="primary">thiE</name>
    <name type="ordered locus">GSU0587</name>
</gene>
<evidence type="ECO:0000250" key="1"/>
<evidence type="ECO:0000305" key="2"/>
<accession>P61411</accession>
<dbReference type="EC" id="2.5.1.3"/>
<dbReference type="EMBL" id="AE017180">
    <property type="protein sequence ID" value="AAR33918.1"/>
    <property type="molecule type" value="Genomic_DNA"/>
</dbReference>
<dbReference type="RefSeq" id="NP_951645.1">
    <property type="nucleotide sequence ID" value="NC_002939.5"/>
</dbReference>
<dbReference type="RefSeq" id="WP_010941250.1">
    <property type="nucleotide sequence ID" value="NC_002939.5"/>
</dbReference>
<dbReference type="SMR" id="P61411"/>
<dbReference type="FunCoup" id="P61411">
    <property type="interactions" value="504"/>
</dbReference>
<dbReference type="STRING" id="243231.GSU0587"/>
<dbReference type="EnsemblBacteria" id="AAR33918">
    <property type="protein sequence ID" value="AAR33918"/>
    <property type="gene ID" value="GSU0587"/>
</dbReference>
<dbReference type="KEGG" id="gsu:GSU0587"/>
<dbReference type="PATRIC" id="fig|243231.5.peg.585"/>
<dbReference type="eggNOG" id="COG0352">
    <property type="taxonomic scope" value="Bacteria"/>
</dbReference>
<dbReference type="HOGENOM" id="CLU_018272_3_2_7"/>
<dbReference type="InParanoid" id="P61411"/>
<dbReference type="OrthoDB" id="9810880at2"/>
<dbReference type="UniPathway" id="UPA00060">
    <property type="reaction ID" value="UER00141"/>
</dbReference>
<dbReference type="Proteomes" id="UP000000577">
    <property type="component" value="Chromosome"/>
</dbReference>
<dbReference type="GO" id="GO:0005737">
    <property type="term" value="C:cytoplasm"/>
    <property type="evidence" value="ECO:0000318"/>
    <property type="project" value="GO_Central"/>
</dbReference>
<dbReference type="GO" id="GO:0000287">
    <property type="term" value="F:magnesium ion binding"/>
    <property type="evidence" value="ECO:0007669"/>
    <property type="project" value="UniProtKB-UniRule"/>
</dbReference>
<dbReference type="GO" id="GO:0004789">
    <property type="term" value="F:thiamine-phosphate diphosphorylase activity"/>
    <property type="evidence" value="ECO:0000318"/>
    <property type="project" value="GO_Central"/>
</dbReference>
<dbReference type="GO" id="GO:0009228">
    <property type="term" value="P:thiamine biosynthetic process"/>
    <property type="evidence" value="ECO:0000318"/>
    <property type="project" value="GO_Central"/>
</dbReference>
<dbReference type="GO" id="GO:0009229">
    <property type="term" value="P:thiamine diphosphate biosynthetic process"/>
    <property type="evidence" value="ECO:0007669"/>
    <property type="project" value="UniProtKB-UniRule"/>
</dbReference>
<dbReference type="CDD" id="cd00564">
    <property type="entry name" value="TMP_TenI"/>
    <property type="match status" value="1"/>
</dbReference>
<dbReference type="FunFam" id="3.20.20.70:FF:000096">
    <property type="entry name" value="Thiamine-phosphate synthase"/>
    <property type="match status" value="1"/>
</dbReference>
<dbReference type="Gene3D" id="3.20.20.70">
    <property type="entry name" value="Aldolase class I"/>
    <property type="match status" value="1"/>
</dbReference>
<dbReference type="HAMAP" id="MF_00097">
    <property type="entry name" value="TMP_synthase"/>
    <property type="match status" value="1"/>
</dbReference>
<dbReference type="InterPro" id="IPR013785">
    <property type="entry name" value="Aldolase_TIM"/>
</dbReference>
<dbReference type="InterPro" id="IPR036206">
    <property type="entry name" value="ThiamineP_synth_sf"/>
</dbReference>
<dbReference type="InterPro" id="IPR022998">
    <property type="entry name" value="ThiamineP_synth_TenI"/>
</dbReference>
<dbReference type="InterPro" id="IPR034291">
    <property type="entry name" value="TMP_synthase"/>
</dbReference>
<dbReference type="NCBIfam" id="TIGR00693">
    <property type="entry name" value="thiE"/>
    <property type="match status" value="1"/>
</dbReference>
<dbReference type="PANTHER" id="PTHR20857">
    <property type="entry name" value="THIAMINE-PHOSPHATE PYROPHOSPHORYLASE"/>
    <property type="match status" value="1"/>
</dbReference>
<dbReference type="PANTHER" id="PTHR20857:SF15">
    <property type="entry name" value="THIAMINE-PHOSPHATE SYNTHASE"/>
    <property type="match status" value="1"/>
</dbReference>
<dbReference type="Pfam" id="PF02581">
    <property type="entry name" value="TMP-TENI"/>
    <property type="match status" value="1"/>
</dbReference>
<dbReference type="SUPFAM" id="SSF51391">
    <property type="entry name" value="Thiamin phosphate synthase"/>
    <property type="match status" value="1"/>
</dbReference>
<reference key="1">
    <citation type="journal article" date="2003" name="Science">
        <title>Genome of Geobacter sulfurreducens: metal reduction in subsurface environments.</title>
        <authorList>
            <person name="Methe B.A."/>
            <person name="Nelson K.E."/>
            <person name="Eisen J.A."/>
            <person name="Paulsen I.T."/>
            <person name="Nelson W.C."/>
            <person name="Heidelberg J.F."/>
            <person name="Wu D."/>
            <person name="Wu M."/>
            <person name="Ward N.L."/>
            <person name="Beanan M.J."/>
            <person name="Dodson R.J."/>
            <person name="Madupu R."/>
            <person name="Brinkac L.M."/>
            <person name="Daugherty S.C."/>
            <person name="DeBoy R.T."/>
            <person name="Durkin A.S."/>
            <person name="Gwinn M.L."/>
            <person name="Kolonay J.F."/>
            <person name="Sullivan S.A."/>
            <person name="Haft D.H."/>
            <person name="Selengut J."/>
            <person name="Davidsen T.M."/>
            <person name="Zafar N."/>
            <person name="White O."/>
            <person name="Tran B."/>
            <person name="Romero C."/>
            <person name="Forberger H.A."/>
            <person name="Weidman J.F."/>
            <person name="Khouri H.M."/>
            <person name="Feldblyum T.V."/>
            <person name="Utterback T.R."/>
            <person name="Van Aken S.E."/>
            <person name="Lovley D.R."/>
            <person name="Fraser C.M."/>
        </authorList>
    </citation>
    <scope>NUCLEOTIDE SEQUENCE [LARGE SCALE GENOMIC DNA]</scope>
    <source>
        <strain>ATCC 51573 / DSM 12127 / PCA</strain>
    </source>
</reference>